<proteinExistence type="evidence at protein level"/>
<comment type="function">
    <molecule>Small integral membrane protein 20</molecule>
    <text evidence="4">Component of the MITRAC (mitochondrial translation regulation assembly intermediate of cytochrome c oxidase complex) complex, that regulates cytochrome c oxidase assembly (PubMed:26321642). Promotes the progression of complex assembly after the association of MT-CO1/COX1 with COX4I1 and COX6C (PubMed:26321642). Chaperone-like assembly factor required to stabilize newly synthesized MT-CO1/COX1 and to prevent its premature turnover (PubMed:26321642).</text>
</comment>
<comment type="function">
    <molecule>Phoenixin-14</molecule>
    <text evidence="1 2 5">Peptide involved in a broad spectrum of regulatory functions (By similarity). Is a ligand for GPR173 (By similarity). As part of the reproductive cycle, it regulates gonadotropin-releasing hormone (GnRH) signaling in the hypothalamus and pituitary gland which augments the release of luteinizing hormone (By similarity). Plays a protective role in memory retention through activation of GNRHR (By similarity). Regulates the secretion of AVP by hypothalamic neurons (By similarity). Plays a role in the transduction of the itch sensation (By similarity). Induces anxiolytic effects, reducing behavior associated with anxiety (By similarity). Regulates food intake as well as satiation and satiety (By similarity). In the ovary, it regulates follicular growth by stimulating granulosa cell proliferation by increasing the expression of GPR173, CREB1, CYP19A1, KITLG, FSHR, and LHCGR (PubMed:30933929). It also increases the production of estradiol (E2) (PubMed:30933929). In the heart, it regulates contractility and relaxation (By similarity). It also plays a cardioprotective role during ischemia, where it activates the SAFE and RISK pathways (By similarity). Stimulates the proliferation and differentiation of preadipocytes (By similarity). In pancreatic islet cells, it induces proliferation of islet cells as well as the production of INS (By similarity).</text>
</comment>
<comment type="function">
    <molecule>Phoenixin-20</molecule>
    <text evidence="1 2 5">Peptide involved in a broad spectrum of regulatory functions (By similarity). Is a ligand for GPR173 (By similarity). As part of the reproductive cycle, it regulates gonadotropin-releasing hormone (GnRH) signaling in the hypothalamus and pituitary gland which augments the release of luteinizing hormone (By similarity). Plays a protective role in memory retention through activation of GNRHR (By similarity). Regulates the secretion of AVP by hypothalamic neurons (By similarity). Plays a role in the transduction of the itch sensation (By similarity). Induces anxiolytic effects, reducing behavior associated with anxiety (By similarity). Regulates food intake as well as satiation and satiety (By similarity). In the ovary, it regulates follicular growth by stimulating granulosa cell proliferation by increasing the expression of GPR173, CREB1, CYP19A1, KITLG, FSHR, and LHCGR (PubMed:30933929). It also increases the production of estradiol (E2) (PubMed:30933929). In the heart, it regulates contractility and relaxation (By similarity). It also plays a cardioprotective role during ischemia, where it activates the SAFE and RISK pathways (By similarity). Stimulates the proliferation and differentiation of preadipocytes (By similarity). In pancreatic islet cells, it induces proliferation of islet cells as well as the production of INS (By similarity).</text>
</comment>
<comment type="subunit">
    <text evidence="4">Component of the MITRAC (mitochondrial translation regulation assembly intermediate of cytochrome c oxidase complex) complex, the core components of this complex being COA3/MITRAC12 and COX14 (PubMed:26321642). Interacts with COA3/MITRAC12 and COX4I1 (PubMed:26321642). Directly interacts with newly synthesized MT-CO1/COX1 (PubMed:26321642).</text>
</comment>
<comment type="subcellular location">
    <molecule>Small integral membrane protein 20</molecule>
    <subcellularLocation>
        <location evidence="4">Mitochondrion inner membrane</location>
        <topology evidence="7">Single-pass membrane protein</topology>
    </subcellularLocation>
</comment>
<comment type="subcellular location">
    <molecule>Phoenixin-14</molecule>
    <subcellularLocation>
        <location evidence="1">Secreted</location>
    </subcellularLocation>
</comment>
<comment type="subcellular location">
    <molecule>Phoenixin-20</molecule>
    <subcellularLocation>
        <location evidence="1">Secreted</location>
    </subcellularLocation>
</comment>
<comment type="alternative products">
    <event type="alternative splicing"/>
    <isoform>
        <id>Q8N5G0-1</id>
        <name>1</name>
        <sequence type="displayed"/>
    </isoform>
    <isoform>
        <id>Q8N5G0-2</id>
        <name>2</name>
        <sequence type="described" ref="VSP_038831"/>
    </isoform>
</comment>
<comment type="tissue specificity">
    <text evidence="5">Expressed in the ovary, specifically in granulosa cells of follicles that have passed the primary stage and in oocytes (at protein level).</text>
</comment>
<comment type="miscellaneous">
    <molecule>Isoform 2</molecule>
    <text evidence="7">Gene prediction.</text>
</comment>
<comment type="sequence caution" evidence="7">
    <conflict type="erroneous initiation">
        <sequence resource="EMBL-CDS" id="AAH06003"/>
    </conflict>
    <text>Extended N-terminus.</text>
</comment>
<comment type="sequence caution" evidence="7">
    <conflict type="erroneous initiation">
        <sequence resource="EMBL-CDS" id="AAH32431"/>
    </conflict>
    <text>Extended N-terminus.</text>
</comment>
<feature type="chain" id="PRO_0000326049" description="Small integral membrane protein 20">
    <location>
        <begin position="1"/>
        <end position="67"/>
    </location>
</feature>
<feature type="peptide" id="PRO_0000449025" description="Phoenixin-20">
    <location>
        <begin position="45"/>
        <end position="64"/>
    </location>
</feature>
<feature type="peptide" id="PRO_0000449026" description="Phoenixin-14">
    <location>
        <begin position="51"/>
        <end position="64"/>
    </location>
</feature>
<feature type="topological domain" description="Mitochondrial matrix" evidence="8">
    <location>
        <begin position="1"/>
        <end position="6"/>
    </location>
</feature>
<feature type="transmembrane region" description="Helical" evidence="3">
    <location>
        <begin position="7"/>
        <end position="27"/>
    </location>
</feature>
<feature type="topological domain" description="Mitochondrial intermembrane" evidence="8">
    <location>
        <begin position="28"/>
        <end position="67"/>
    </location>
</feature>
<feature type="modified residue" description="Phenylalanine amide" evidence="1">
    <location>
        <position position="64"/>
    </location>
</feature>
<feature type="splice variant" id="VSP_038831" description="In isoform 2.">
    <original>M</original>
    <variation>MVKEVWRVLREEPGRRKESRQNRARGNRVQQNSSNLNPTPAPGPHSTESRGRRRAGSEAPPRPGSESLSTSSERGHGPAVGNLVSESAGRSAGQGSPGPDAM</variation>
    <location>
        <position position="1"/>
    </location>
</feature>
<feature type="sequence variant" id="VAR_039968" description="In dbSNP:rs4521339.">
    <original>A</original>
    <variation>T</variation>
    <location>
        <position position="8"/>
    </location>
</feature>
<feature type="sequence variant" id="VAR_082869" description="In dbSNP:rs2305669." evidence="7">
    <original>A</original>
    <variation>T</variation>
    <location sequence="Q8N5G0-2">
        <position position="41"/>
    </location>
</feature>
<feature type="sequence variant" id="VAR_082870" description="In dbSNP:rs6448414." evidence="7">
    <original>S</original>
    <variation>N</variation>
    <location sequence="Q8N5G0-2">
        <position position="65"/>
    </location>
</feature>
<feature type="sequence variant" id="VAR_082871" description="In dbSNP:rs2305670." evidence="7">
    <original>H</original>
    <variation>N</variation>
    <location sequence="Q8N5G0-2">
        <position position="76"/>
    </location>
</feature>
<dbReference type="EMBL" id="AC133961">
    <property type="status" value="NOT_ANNOTATED_CDS"/>
    <property type="molecule type" value="Genomic_DNA"/>
</dbReference>
<dbReference type="EMBL" id="CH471069">
    <property type="protein sequence ID" value="EAW92845.1"/>
    <property type="molecule type" value="Genomic_DNA"/>
</dbReference>
<dbReference type="EMBL" id="BC006003">
    <property type="protein sequence ID" value="AAH06003.1"/>
    <property type="status" value="ALT_INIT"/>
    <property type="molecule type" value="mRNA"/>
</dbReference>
<dbReference type="EMBL" id="BC032431">
    <property type="protein sequence ID" value="AAH32431.1"/>
    <property type="status" value="ALT_INIT"/>
    <property type="molecule type" value="mRNA"/>
</dbReference>
<dbReference type="CCDS" id="CCDS47038.1">
    <molecule id="Q8N5G0-1"/>
</dbReference>
<dbReference type="RefSeq" id="NP_001138904.1">
    <molecule id="Q8N5G0-1"/>
    <property type="nucleotide sequence ID" value="NM_001145432.3"/>
</dbReference>
<dbReference type="SMR" id="Q8N5G0"/>
<dbReference type="BioGRID" id="133034">
    <property type="interactions" value="13"/>
</dbReference>
<dbReference type="CORUM" id="Q8N5G0"/>
<dbReference type="FunCoup" id="Q8N5G0">
    <property type="interactions" value="267"/>
</dbReference>
<dbReference type="IntAct" id="Q8N5G0">
    <property type="interactions" value="7"/>
</dbReference>
<dbReference type="MINT" id="Q8N5G0"/>
<dbReference type="STRING" id="9606.ENSP00000427407"/>
<dbReference type="iPTMnet" id="Q8N5G0"/>
<dbReference type="PhosphoSitePlus" id="Q8N5G0"/>
<dbReference type="SwissPalm" id="Q8N5G0"/>
<dbReference type="BioMuta" id="SMIM20"/>
<dbReference type="DMDM" id="172046141"/>
<dbReference type="jPOST" id="Q8N5G0"/>
<dbReference type="MassIVE" id="Q8N5G0"/>
<dbReference type="PaxDb" id="9606-ENSP00000427407"/>
<dbReference type="PeptideAtlas" id="Q8N5G0"/>
<dbReference type="ProteomicsDB" id="72047">
    <molecule id="Q8N5G0-1"/>
</dbReference>
<dbReference type="ProteomicsDB" id="72048">
    <molecule id="Q8N5G0-2"/>
</dbReference>
<dbReference type="Pumba" id="Q8N5G0"/>
<dbReference type="TopDownProteomics" id="Q8N5G0-1">
    <molecule id="Q8N5G0-1"/>
</dbReference>
<dbReference type="TopDownProteomics" id="Q8N5G0-2">
    <molecule id="Q8N5G0-2"/>
</dbReference>
<dbReference type="Antibodypedia" id="52038">
    <property type="antibodies" value="6 antibodies from 5 providers"/>
</dbReference>
<dbReference type="DNASU" id="389203"/>
<dbReference type="Ensembl" id="ENST00000506197.3">
    <molecule id="Q8N5G0-1"/>
    <property type="protein sequence ID" value="ENSP00000427407.2"/>
    <property type="gene ID" value="ENSG00000250317.9"/>
</dbReference>
<dbReference type="GeneID" id="389203"/>
<dbReference type="KEGG" id="hsa:389203"/>
<dbReference type="MANE-Select" id="ENST00000506197.3">
    <property type="protein sequence ID" value="ENSP00000427407.2"/>
    <property type="RefSeq nucleotide sequence ID" value="NM_001145432.3"/>
    <property type="RefSeq protein sequence ID" value="NP_001138904.1"/>
</dbReference>
<dbReference type="UCSC" id="uc003grw.5">
    <molecule id="Q8N5G0-1"/>
    <property type="organism name" value="human"/>
</dbReference>
<dbReference type="AGR" id="HGNC:37260"/>
<dbReference type="CTD" id="389203"/>
<dbReference type="DisGeNET" id="389203"/>
<dbReference type="GeneCards" id="SMIM20"/>
<dbReference type="HGNC" id="HGNC:37260">
    <property type="gene designation" value="SMIM20"/>
</dbReference>
<dbReference type="HPA" id="ENSG00000250317">
    <property type="expression patterns" value="Low tissue specificity"/>
</dbReference>
<dbReference type="MIM" id="617465">
    <property type="type" value="gene"/>
</dbReference>
<dbReference type="neXtProt" id="NX_Q8N5G0"/>
<dbReference type="OpenTargets" id="ENSG00000250317"/>
<dbReference type="PharmGKB" id="PA165663312"/>
<dbReference type="VEuPathDB" id="HostDB:ENSG00000250317"/>
<dbReference type="eggNOG" id="ENOG502S83Z">
    <property type="taxonomic scope" value="Eukaryota"/>
</dbReference>
<dbReference type="GeneTree" id="ENSGT00390000002398"/>
<dbReference type="HOGENOM" id="CLU_1598242_0_0_1"/>
<dbReference type="InParanoid" id="Q8N5G0"/>
<dbReference type="OrthoDB" id="8755372at2759"/>
<dbReference type="PAN-GO" id="Q8N5G0">
    <property type="GO annotations" value="2 GO annotations based on evolutionary models"/>
</dbReference>
<dbReference type="PhylomeDB" id="Q8N5G0"/>
<dbReference type="TreeFam" id="TF353700"/>
<dbReference type="PathwayCommons" id="Q8N5G0"/>
<dbReference type="Reactome" id="R-HSA-9864848">
    <property type="pathway name" value="Complex IV assembly"/>
</dbReference>
<dbReference type="SignaLink" id="Q8N5G0"/>
<dbReference type="BioGRID-ORCS" id="389203">
    <property type="hits" value="14 hits in 1149 CRISPR screens"/>
</dbReference>
<dbReference type="ChiTaRS" id="SMIM20">
    <property type="organism name" value="human"/>
</dbReference>
<dbReference type="GenomeRNAi" id="389203"/>
<dbReference type="Pharos" id="Q8N5G0">
    <property type="development level" value="Tbio"/>
</dbReference>
<dbReference type="PRO" id="PR:Q8N5G0"/>
<dbReference type="Proteomes" id="UP000005640">
    <property type="component" value="Chromosome 4"/>
</dbReference>
<dbReference type="RNAct" id="Q8N5G0">
    <property type="molecule type" value="protein"/>
</dbReference>
<dbReference type="Bgee" id="ENSG00000250317">
    <property type="expression patterns" value="Expressed in ileal mucosa and 177 other cell types or tissues"/>
</dbReference>
<dbReference type="ExpressionAtlas" id="Q8N5G0">
    <property type="expression patterns" value="baseline and differential"/>
</dbReference>
<dbReference type="GO" id="GO:0005576">
    <property type="term" value="C:extracellular region"/>
    <property type="evidence" value="ECO:0007669"/>
    <property type="project" value="UniProtKB-SubCell"/>
</dbReference>
<dbReference type="GO" id="GO:0005743">
    <property type="term" value="C:mitochondrial inner membrane"/>
    <property type="evidence" value="ECO:0000314"/>
    <property type="project" value="UniProtKB"/>
</dbReference>
<dbReference type="GO" id="GO:0005739">
    <property type="term" value="C:mitochondrion"/>
    <property type="evidence" value="ECO:0006056"/>
    <property type="project" value="FlyBase"/>
</dbReference>
<dbReference type="GO" id="GO:0033617">
    <property type="term" value="P:mitochondrial cytochrome c oxidase assembly"/>
    <property type="evidence" value="ECO:0000314"/>
    <property type="project" value="UniProtKB"/>
</dbReference>
<dbReference type="InterPro" id="IPR027917">
    <property type="entry name" value="SMIM20"/>
</dbReference>
<dbReference type="PANTHER" id="PTHR34923">
    <property type="entry name" value="SMALL INTEGRAL MEMBRANE PROTEIN 20"/>
    <property type="match status" value="1"/>
</dbReference>
<dbReference type="PANTHER" id="PTHR34923:SF1">
    <property type="entry name" value="SMALL INTEGRAL MEMBRANE PROTEIN 20"/>
    <property type="match status" value="1"/>
</dbReference>
<dbReference type="Pfam" id="PF15061">
    <property type="entry name" value="DUF4538"/>
    <property type="match status" value="1"/>
</dbReference>
<sequence>MSRNLRTALIFGGFISLIGAAFYPIYFRPLMRLEEYKKEQAINRAGIVQEDVQPPGLKVWSDPFGRK</sequence>
<keyword id="KW-0025">Alternative splicing</keyword>
<keyword id="KW-0027">Amidation</keyword>
<keyword id="KW-0472">Membrane</keyword>
<keyword id="KW-0496">Mitochondrion</keyword>
<keyword id="KW-0999">Mitochondrion inner membrane</keyword>
<keyword id="KW-1267">Proteomics identification</keyword>
<keyword id="KW-1185">Reference proteome</keyword>
<keyword id="KW-0964">Secreted</keyword>
<keyword id="KW-0812">Transmembrane</keyword>
<keyword id="KW-1133">Transmembrane helix</keyword>
<accession>Q8N5G0</accession>
<accession>C9JYT8</accession>
<accession>Q9BRT5</accession>
<reference key="1">
    <citation type="journal article" date="2005" name="Nature">
        <title>Generation and annotation of the DNA sequences of human chromosomes 2 and 4.</title>
        <authorList>
            <person name="Hillier L.W."/>
            <person name="Graves T.A."/>
            <person name="Fulton R.S."/>
            <person name="Fulton L.A."/>
            <person name="Pepin K.H."/>
            <person name="Minx P."/>
            <person name="Wagner-McPherson C."/>
            <person name="Layman D."/>
            <person name="Wylie K."/>
            <person name="Sekhon M."/>
            <person name="Becker M.C."/>
            <person name="Fewell G.A."/>
            <person name="Delehaunty K.D."/>
            <person name="Miner T.L."/>
            <person name="Nash W.E."/>
            <person name="Kremitzki C."/>
            <person name="Oddy L."/>
            <person name="Du H."/>
            <person name="Sun H."/>
            <person name="Bradshaw-Cordum H."/>
            <person name="Ali J."/>
            <person name="Carter J."/>
            <person name="Cordes M."/>
            <person name="Harris A."/>
            <person name="Isak A."/>
            <person name="van Brunt A."/>
            <person name="Nguyen C."/>
            <person name="Du F."/>
            <person name="Courtney L."/>
            <person name="Kalicki J."/>
            <person name="Ozersky P."/>
            <person name="Abbott S."/>
            <person name="Armstrong J."/>
            <person name="Belter E.A."/>
            <person name="Caruso L."/>
            <person name="Cedroni M."/>
            <person name="Cotton M."/>
            <person name="Davidson T."/>
            <person name="Desai A."/>
            <person name="Elliott G."/>
            <person name="Erb T."/>
            <person name="Fronick C."/>
            <person name="Gaige T."/>
            <person name="Haakenson W."/>
            <person name="Haglund K."/>
            <person name="Holmes A."/>
            <person name="Harkins R."/>
            <person name="Kim K."/>
            <person name="Kruchowski S.S."/>
            <person name="Strong C.M."/>
            <person name="Grewal N."/>
            <person name="Goyea E."/>
            <person name="Hou S."/>
            <person name="Levy A."/>
            <person name="Martinka S."/>
            <person name="Mead K."/>
            <person name="McLellan M.D."/>
            <person name="Meyer R."/>
            <person name="Randall-Maher J."/>
            <person name="Tomlinson C."/>
            <person name="Dauphin-Kohlberg S."/>
            <person name="Kozlowicz-Reilly A."/>
            <person name="Shah N."/>
            <person name="Swearengen-Shahid S."/>
            <person name="Snider J."/>
            <person name="Strong J.T."/>
            <person name="Thompson J."/>
            <person name="Yoakum M."/>
            <person name="Leonard S."/>
            <person name="Pearman C."/>
            <person name="Trani L."/>
            <person name="Radionenko M."/>
            <person name="Waligorski J.E."/>
            <person name="Wang C."/>
            <person name="Rock S.M."/>
            <person name="Tin-Wollam A.-M."/>
            <person name="Maupin R."/>
            <person name="Latreille P."/>
            <person name="Wendl M.C."/>
            <person name="Yang S.-P."/>
            <person name="Pohl C."/>
            <person name="Wallis J.W."/>
            <person name="Spieth J."/>
            <person name="Bieri T.A."/>
            <person name="Berkowicz N."/>
            <person name="Nelson J.O."/>
            <person name="Osborne J."/>
            <person name="Ding L."/>
            <person name="Meyer R."/>
            <person name="Sabo A."/>
            <person name="Shotland Y."/>
            <person name="Sinha P."/>
            <person name="Wohldmann P.E."/>
            <person name="Cook L.L."/>
            <person name="Hickenbotham M.T."/>
            <person name="Eldred J."/>
            <person name="Williams D."/>
            <person name="Jones T.A."/>
            <person name="She X."/>
            <person name="Ciccarelli F.D."/>
            <person name="Izaurralde E."/>
            <person name="Taylor J."/>
            <person name="Schmutz J."/>
            <person name="Myers R.M."/>
            <person name="Cox D.R."/>
            <person name="Huang X."/>
            <person name="McPherson J.D."/>
            <person name="Mardis E.R."/>
            <person name="Clifton S.W."/>
            <person name="Warren W.C."/>
            <person name="Chinwalla A.T."/>
            <person name="Eddy S.R."/>
            <person name="Marra M.A."/>
            <person name="Ovcharenko I."/>
            <person name="Furey T.S."/>
            <person name="Miller W."/>
            <person name="Eichler E.E."/>
            <person name="Bork P."/>
            <person name="Suyama M."/>
            <person name="Torrents D."/>
            <person name="Waterston R.H."/>
            <person name="Wilson R.K."/>
        </authorList>
    </citation>
    <scope>NUCLEOTIDE SEQUENCE [LARGE SCALE GENOMIC DNA]</scope>
</reference>
<reference key="2">
    <citation type="submission" date="2005-07" db="EMBL/GenBank/DDBJ databases">
        <authorList>
            <person name="Mural R.J."/>
            <person name="Istrail S."/>
            <person name="Sutton G.G."/>
            <person name="Florea L."/>
            <person name="Halpern A.L."/>
            <person name="Mobarry C.M."/>
            <person name="Lippert R."/>
            <person name="Walenz B."/>
            <person name="Shatkay H."/>
            <person name="Dew I."/>
            <person name="Miller J.R."/>
            <person name="Flanigan M.J."/>
            <person name="Edwards N.J."/>
            <person name="Bolanos R."/>
            <person name="Fasulo D."/>
            <person name="Halldorsson B.V."/>
            <person name="Hannenhalli S."/>
            <person name="Turner R."/>
            <person name="Yooseph S."/>
            <person name="Lu F."/>
            <person name="Nusskern D.R."/>
            <person name="Shue B.C."/>
            <person name="Zheng X.H."/>
            <person name="Zhong F."/>
            <person name="Delcher A.L."/>
            <person name="Huson D.H."/>
            <person name="Kravitz S.A."/>
            <person name="Mouchard L."/>
            <person name="Reinert K."/>
            <person name="Remington K.A."/>
            <person name="Clark A.G."/>
            <person name="Waterman M.S."/>
            <person name="Eichler E.E."/>
            <person name="Adams M.D."/>
            <person name="Hunkapiller M.W."/>
            <person name="Myers E.W."/>
            <person name="Venter J.C."/>
        </authorList>
    </citation>
    <scope>NUCLEOTIDE SEQUENCE [LARGE SCALE GENOMIC DNA]</scope>
</reference>
<reference key="3">
    <citation type="journal article" date="2004" name="Genome Res.">
        <title>The status, quality, and expansion of the NIH full-length cDNA project: the Mammalian Gene Collection (MGC).</title>
        <authorList>
            <consortium name="The MGC Project Team"/>
        </authorList>
    </citation>
    <scope>NUCLEOTIDE SEQUENCE [LARGE SCALE MRNA] (ISOFORM 1)</scope>
    <source>
        <tissue>Skeletal muscle</tissue>
        <tissue>Testis</tissue>
    </source>
</reference>
<reference key="4">
    <citation type="journal article" date="2011" name="BMC Syst. Biol.">
        <title>Initial characterization of the human central proteome.</title>
        <authorList>
            <person name="Burkard T.R."/>
            <person name="Planyavsky M."/>
            <person name="Kaupe I."/>
            <person name="Breitwieser F.P."/>
            <person name="Buerckstuemmer T."/>
            <person name="Bennett K.L."/>
            <person name="Superti-Furga G."/>
            <person name="Colinge J."/>
        </authorList>
    </citation>
    <scope>IDENTIFICATION BY MASS SPECTROMETRY [LARGE SCALE ANALYSIS]</scope>
</reference>
<reference key="5">
    <citation type="journal article" date="2015" name="Cell Rep.">
        <title>MITRAC7 acts as a COX1-specific chaperone and reveals a checkpoint during cytochrome c oxidase assembly.</title>
        <authorList>
            <person name="Dennerlein S."/>
            <person name="Oeljeklaus S."/>
            <person name="Jans D."/>
            <person name="Hellwig C."/>
            <person name="Bareth B."/>
            <person name="Jakobs S."/>
            <person name="Deckers M."/>
            <person name="Warscheid B."/>
            <person name="Rehling P."/>
        </authorList>
    </citation>
    <scope>FUNCTION</scope>
    <scope>INTERACTION WITH COA3; COX4I1 AND MT-CO1</scope>
    <scope>SUBCELLULAR LOCATION</scope>
    <scope>TOPOLOGY</scope>
</reference>
<reference key="6">
    <citation type="journal article" date="2019" name="Reproduction">
        <title>Effect of the Neuropeptide Phoenixin and Its Receptor GPR173 During Folliculogenesis.</title>
        <authorList>
            <person name="Nguyen X.P."/>
            <person name="Nakamura T."/>
            <person name="Osuka S."/>
            <person name="Bayasula B."/>
            <person name="Nakanishi N."/>
            <person name="Kasahara Y."/>
            <person name="Muraoka A."/>
            <person name="Hayashi S."/>
            <person name="Nagai T."/>
            <person name="Murase T."/>
            <person name="Goto M."/>
            <person name="Iwase A."/>
            <person name="Kikkawa F."/>
        </authorList>
    </citation>
    <scope>FUNCTION</scope>
    <scope>TISSUE SPECIFICITY</scope>
</reference>
<name>SIM20_HUMAN</name>
<evidence type="ECO:0000250" key="1">
    <source>
        <dbReference type="UniProtKB" id="C0HLM6"/>
    </source>
</evidence>
<evidence type="ECO:0000250" key="2">
    <source>
        <dbReference type="UniProtKB" id="D3Z7Q2"/>
    </source>
</evidence>
<evidence type="ECO:0000255" key="3"/>
<evidence type="ECO:0000269" key="4">
    <source>
    </source>
</evidence>
<evidence type="ECO:0000269" key="5">
    <source>
    </source>
</evidence>
<evidence type="ECO:0000303" key="6">
    <source>
    </source>
</evidence>
<evidence type="ECO:0000305" key="7"/>
<evidence type="ECO:0000305" key="8">
    <source>
    </source>
</evidence>
<organism>
    <name type="scientific">Homo sapiens</name>
    <name type="common">Human</name>
    <dbReference type="NCBI Taxonomy" id="9606"/>
    <lineage>
        <taxon>Eukaryota</taxon>
        <taxon>Metazoa</taxon>
        <taxon>Chordata</taxon>
        <taxon>Craniata</taxon>
        <taxon>Vertebrata</taxon>
        <taxon>Euteleostomi</taxon>
        <taxon>Mammalia</taxon>
        <taxon>Eutheria</taxon>
        <taxon>Euarchontoglires</taxon>
        <taxon>Primates</taxon>
        <taxon>Haplorrhini</taxon>
        <taxon>Catarrhini</taxon>
        <taxon>Hominidae</taxon>
        <taxon>Homo</taxon>
    </lineage>
</organism>
<protein>
    <recommendedName>
        <fullName>Small integral membrane protein 20</fullName>
    </recommendedName>
    <alternativeName>
        <fullName evidence="6">Mitochondrial translation regulation assembly intermediate of cytochrome c oxidase protein of 7 kDa</fullName>
        <shortName evidence="6">MITRAC7</shortName>
    </alternativeName>
    <component>
        <recommendedName>
            <fullName evidence="1">Phoenixin-14</fullName>
            <shortName evidence="1">PNX-14</shortName>
        </recommendedName>
    </component>
    <component>
        <recommendedName>
            <fullName evidence="1">Phoenixin-20</fullName>
            <shortName evidence="1">PNX-20</shortName>
        </recommendedName>
    </component>
</protein>
<gene>
    <name type="primary">SMIM20</name>
    <name type="synonym">C4orf52</name>
    <name evidence="6" type="synonym">MITRAC7</name>
</gene>